<name>CLZ17_COCLU</name>
<protein>
    <recommendedName>
        <fullName evidence="3">Citrate synthase-like protein clz17</fullName>
        <ecNumber evidence="5">2.3.3.-</ecNumber>
    </recommendedName>
    <alternativeName>
        <fullName evidence="3">Squalestatin S1 biosynthesis cluster protein clz17</fullName>
    </alternativeName>
    <alternativeName>
        <fullName evidence="3">Zaragozic acid A biosynthesis cluster protein 17</fullName>
    </alternativeName>
</protein>
<dbReference type="EC" id="2.3.3.-" evidence="5"/>
<dbReference type="EMBL" id="MF806532">
    <property type="protein sequence ID" value="AXF50647.1"/>
    <property type="molecule type" value="Genomic_DNA"/>
</dbReference>
<dbReference type="SMR" id="A0A345BJN4"/>
<dbReference type="GO" id="GO:0005759">
    <property type="term" value="C:mitochondrial matrix"/>
    <property type="evidence" value="ECO:0007669"/>
    <property type="project" value="TreeGrafter"/>
</dbReference>
<dbReference type="GO" id="GO:0004108">
    <property type="term" value="F:citrate (Si)-synthase activity"/>
    <property type="evidence" value="ECO:0007669"/>
    <property type="project" value="TreeGrafter"/>
</dbReference>
<dbReference type="GO" id="GO:0005975">
    <property type="term" value="P:carbohydrate metabolic process"/>
    <property type="evidence" value="ECO:0007669"/>
    <property type="project" value="TreeGrafter"/>
</dbReference>
<dbReference type="GO" id="GO:0006099">
    <property type="term" value="P:tricarboxylic acid cycle"/>
    <property type="evidence" value="ECO:0007669"/>
    <property type="project" value="TreeGrafter"/>
</dbReference>
<dbReference type="Gene3D" id="1.10.580.10">
    <property type="entry name" value="Citrate Synthase, domain 1"/>
    <property type="match status" value="1"/>
</dbReference>
<dbReference type="Gene3D" id="1.10.230.10">
    <property type="entry name" value="Cytochrome P450-Terp, domain 2"/>
    <property type="match status" value="1"/>
</dbReference>
<dbReference type="InterPro" id="IPR016142">
    <property type="entry name" value="Citrate_synth-like_lrg_a-sub"/>
</dbReference>
<dbReference type="InterPro" id="IPR016143">
    <property type="entry name" value="Citrate_synth-like_sm_a-sub"/>
</dbReference>
<dbReference type="InterPro" id="IPR002020">
    <property type="entry name" value="Citrate_synthase"/>
</dbReference>
<dbReference type="InterPro" id="IPR019810">
    <property type="entry name" value="Citrate_synthase_AS"/>
</dbReference>
<dbReference type="InterPro" id="IPR036969">
    <property type="entry name" value="Citrate_synthase_sf"/>
</dbReference>
<dbReference type="PANTHER" id="PTHR11739">
    <property type="entry name" value="CITRATE SYNTHASE"/>
    <property type="match status" value="1"/>
</dbReference>
<dbReference type="PANTHER" id="PTHR11739:SF4">
    <property type="entry name" value="CITRATE SYNTHASE, PEROXISOMAL"/>
    <property type="match status" value="1"/>
</dbReference>
<dbReference type="Pfam" id="PF00285">
    <property type="entry name" value="Citrate_synt"/>
    <property type="match status" value="1"/>
</dbReference>
<dbReference type="PRINTS" id="PR00143">
    <property type="entry name" value="CITRTSNTHASE"/>
</dbReference>
<dbReference type="SUPFAM" id="SSF48256">
    <property type="entry name" value="Citrate synthase"/>
    <property type="match status" value="1"/>
</dbReference>
<dbReference type="PROSITE" id="PS00480">
    <property type="entry name" value="CITRATE_SYNTHASE"/>
    <property type="match status" value="1"/>
</dbReference>
<feature type="chain" id="PRO_0000452638" description="Citrate synthase-like protein clz17">
    <location>
        <begin position="1"/>
        <end position="423"/>
    </location>
</feature>
<feature type="active site" evidence="1">
    <location>
        <position position="357"/>
    </location>
</feature>
<feature type="active site" evidence="1">
    <location>
        <position position="413"/>
    </location>
</feature>
<sequence>MATVNGAVGKPQHISKMIESTKMNGNQAQDAAGRADTPVSSDTPDYLHVFDSRTCNIHHIPVSDGFVRGSDLSTIAAPVKGNSGRMQKLAVLDPGFQHTACKESGITFIDGEKGELRYRGVRIEDLFHDHDFDSTLHLLLWGRLPTNDEKIAFERRIFEAATPPQEVCDVIRKLPKNTDFISMFLTGLSTYMGADEEMTRSRHQAVMTYHKNMKATDDAIIRCFAYVSATLATVYCHVKGVELHPPKEGLTLVENFLHMIGMEDPDKKVSRTIDRLSINMADHELSCSTAAFLHVASSLTDPMTCLLTAISAASGPLHGGALEVCYQGLELIGSVENVPAYIAAVKAKKFRLFGYGHRVYKTQDPRAALTKELMEEHREAIAANPLLQIAVEIDRQANTDPYFVERKLKLNADFYGCFVYIAL</sequence>
<keyword id="KW-0808">Transferase</keyword>
<proteinExistence type="evidence at protein level"/>
<gene>
    <name evidence="3" type="primary">clz17</name>
</gene>
<evidence type="ECO:0000250" key="1">
    <source>
        <dbReference type="UniProtKB" id="A0A3G1DJJ8"/>
    </source>
</evidence>
<evidence type="ECO:0000269" key="2">
    <source>
    </source>
</evidence>
<evidence type="ECO:0000303" key="3">
    <source>
    </source>
</evidence>
<evidence type="ECO:0000305" key="4"/>
<evidence type="ECO:0000305" key="5">
    <source>
    </source>
</evidence>
<reference key="1">
    <citation type="journal article" date="2017" name="Org. Lett.">
        <title>Identification and heterologous production of a benzoyl-primed tricarboxylic acid polyketide intermediate from the zaragozic acid A biosynthetic pathway.</title>
        <authorList>
            <person name="Liu N."/>
            <person name="Hung Y.S."/>
            <person name="Gao S.S."/>
            <person name="Hang L."/>
            <person name="Zou Y."/>
            <person name="Chooi Y.H."/>
            <person name="Tang Y."/>
        </authorList>
    </citation>
    <scope>NUCLEOTIDE SEQUENCE [GENOMIC DNA]</scope>
    <scope>FUNCTION</scope>
    <scope>CATALYTIC ACTIVITY</scope>
    <scope>PATHWAY</scope>
    <source>
        <strain>ATCC 74067</strain>
    </source>
</reference>
<comment type="function">
    <text evidence="1 2 5">Citrate synthase-like protein; part of the gene cluster that mediates the biosynthesis of squalestatin S1 (SQS1, also known as zaragozic acid A), a heavily oxidized fungal polyketide that offers potent cholesterol lowering activity by targeting squalene synthase (SS) (PubMed:28605916). SQS1 is composed of a 2,8-dioxobicyclic[3.2.1]octane-3,4,5-tricarboxyclic acid core that is connected to two lipophilic polyketide arms (PubMed:28605916). These initial steps feature the priming of an unusual benzoic acid starter unit onto the highly reducing polyketide synthase clz14, followed by oxaloacetate extension and product release to generate a tricarboxylic acid containing product (PubMed:28605916). The phenylalanine ammonia lyase (PAL) clz10 and the acyl-CoA ligase clz12 are involved in transforming phenylalanine into benzoyl-CoA (PubMed:28605916). The citrate synthase-like protein clz17 is involved in connecting the C-alpha-carbons of the hexaketide chain and oxaloacetate to afford the tricarboxylic acid unit (PubMed:28605916). The potential hydrolytic enzymes, clz11 and clz13, are in close proximity to pks2 and may participate in product release (PubMed:28605916). On the other side, the tetraketide arm is synthesized by a the squalestatin tetraketide synthase clz2 and enzymatically esterified to the core in the last biosynthetic step, by the acetyltransferase clz6 (By similarity). The biosynthesis of the tetraketide must involve 3 rounds of chain extension (By similarity). After the first and second rounds methyl-transfer occurs, and in all rounds of extension the ketoreductase and dehydratase are active (By similarity). The enoyl reductase and C-MeT of clz2 are not active in the final round of extension (By similarity). The acetyltransferase clz6 appears to have a broad substrate selectivity for its acyl CoA substrate, allowing the in vitro synthesis of novel squalestatins (By similarity). The biosynthesis of SQS1 requires several oxidative steps likely performed by oxidoreductases clz3, clz15 and clz16 (Probable). Finally, in support of the identification of the cluster as being responsible for SQS1 production, the cluster contains a gene encoding a putative squalene synthase (SS) clz20, suggesting a likely mechanism for self-resistance (Probable).</text>
</comment>
<comment type="pathway">
    <text evidence="2">Secondary metabolite biosynthesis.</text>
</comment>
<comment type="similarity">
    <text evidence="4">Belongs to the citrate synthase family.</text>
</comment>
<accession>A0A345BJN4</accession>
<organism>
    <name type="scientific">Cochliobolus lunatus</name>
    <name type="common">Filamentous fungus</name>
    <name type="synonym">Curvularia lunata</name>
    <dbReference type="NCBI Taxonomy" id="5503"/>
    <lineage>
        <taxon>Eukaryota</taxon>
        <taxon>Fungi</taxon>
        <taxon>Dikarya</taxon>
        <taxon>Ascomycota</taxon>
        <taxon>Pezizomycotina</taxon>
        <taxon>Dothideomycetes</taxon>
        <taxon>Pleosporomycetidae</taxon>
        <taxon>Pleosporales</taxon>
        <taxon>Pleosporineae</taxon>
        <taxon>Pleosporaceae</taxon>
        <taxon>Curvularia</taxon>
    </lineage>
</organism>